<reference key="1">
    <citation type="journal article" date="1996" name="Science">
        <title>Complete genome sequence of the methanogenic archaeon, Methanococcus jannaschii.</title>
        <authorList>
            <person name="Bult C.J."/>
            <person name="White O."/>
            <person name="Olsen G.J."/>
            <person name="Zhou L."/>
            <person name="Fleischmann R.D."/>
            <person name="Sutton G.G."/>
            <person name="Blake J.A."/>
            <person name="FitzGerald L.M."/>
            <person name="Clayton R.A."/>
            <person name="Gocayne J.D."/>
            <person name="Kerlavage A.R."/>
            <person name="Dougherty B.A."/>
            <person name="Tomb J.-F."/>
            <person name="Adams M.D."/>
            <person name="Reich C.I."/>
            <person name="Overbeek R."/>
            <person name="Kirkness E.F."/>
            <person name="Weinstock K.G."/>
            <person name="Merrick J.M."/>
            <person name="Glodek A."/>
            <person name="Scott J.L."/>
            <person name="Geoghagen N.S.M."/>
            <person name="Weidman J.F."/>
            <person name="Fuhrmann J.L."/>
            <person name="Nguyen D."/>
            <person name="Utterback T.R."/>
            <person name="Kelley J.M."/>
            <person name="Peterson J.D."/>
            <person name="Sadow P.W."/>
            <person name="Hanna M.C."/>
            <person name="Cotton M.D."/>
            <person name="Roberts K.M."/>
            <person name="Hurst M.A."/>
            <person name="Kaine B.P."/>
            <person name="Borodovsky M."/>
            <person name="Klenk H.-P."/>
            <person name="Fraser C.M."/>
            <person name="Smith H.O."/>
            <person name="Woese C.R."/>
            <person name="Venter J.C."/>
        </authorList>
    </citation>
    <scope>NUCLEOTIDE SEQUENCE [LARGE SCALE GENOMIC DNA]</scope>
    <source>
        <strain>ATCC 43067 / DSM 2661 / JAL-1 / JCM 10045 / NBRC 100440</strain>
    </source>
</reference>
<protein>
    <recommendedName>
        <fullName>Uncharacterized ABC transporter ATP-binding protein MJ0121</fullName>
    </recommendedName>
</protein>
<sequence length="261" mass="29262">MEIKEITIIGGYDKNGNPEPVREVTIKRGEIVGVVGPTGSGKSNLISDIEQLAQGDTISKRRILVNGEVPPIEMRRDPKKRRIAQLSQNMNFLADMTVEEFILMHAKSRGVYRENIVDEVIELANRLTGEPIKKDYNLTILSGGQSRSLMVADVAVISDSPIVLIDEIENAGIKKHEALELLAGYGKIVLVITHDPVLALMTDRRIVMRNGGMQKIIETTEEEKEISRKINEVDNWLLSLREKIRFGERLTHEDISLMVKG</sequence>
<gene>
    <name type="ordered locus">MJ0121</name>
</gene>
<proteinExistence type="inferred from homology"/>
<organism>
    <name type="scientific">Methanocaldococcus jannaschii (strain ATCC 43067 / DSM 2661 / JAL-1 / JCM 10045 / NBRC 100440)</name>
    <name type="common">Methanococcus jannaschii</name>
    <dbReference type="NCBI Taxonomy" id="243232"/>
    <lineage>
        <taxon>Archaea</taxon>
        <taxon>Methanobacteriati</taxon>
        <taxon>Methanobacteriota</taxon>
        <taxon>Methanomada group</taxon>
        <taxon>Methanococci</taxon>
        <taxon>Methanococcales</taxon>
        <taxon>Methanocaldococcaceae</taxon>
        <taxon>Methanocaldococcus</taxon>
    </lineage>
</organism>
<keyword id="KW-0067">ATP-binding</keyword>
<keyword id="KW-0547">Nucleotide-binding</keyword>
<keyword id="KW-1185">Reference proteome</keyword>
<keyword id="KW-0813">Transport</keyword>
<comment type="similarity">
    <text evidence="2">Belongs to the ABC transporter superfamily.</text>
</comment>
<evidence type="ECO:0000255" key="1">
    <source>
        <dbReference type="PROSITE-ProRule" id="PRU00434"/>
    </source>
</evidence>
<evidence type="ECO:0000305" key="2"/>
<feature type="chain" id="PRO_0000093218" description="Uncharacterized ABC transporter ATP-binding protein MJ0121">
    <location>
        <begin position="1"/>
        <end position="261"/>
    </location>
</feature>
<feature type="domain" description="ABC transporter" evidence="1">
    <location>
        <begin position="1"/>
        <end position="236"/>
    </location>
</feature>
<feature type="binding site" evidence="1">
    <location>
        <begin position="36"/>
        <end position="43"/>
    </location>
    <ligand>
        <name>ATP</name>
        <dbReference type="ChEBI" id="CHEBI:30616"/>
    </ligand>
</feature>
<name>Y121_METJA</name>
<accession>Q57585</accession>
<dbReference type="EMBL" id="L77117">
    <property type="protein sequence ID" value="AAB98102.1"/>
    <property type="molecule type" value="Genomic_DNA"/>
</dbReference>
<dbReference type="PIR" id="A64315">
    <property type="entry name" value="A64315"/>
</dbReference>
<dbReference type="RefSeq" id="WP_010869614.1">
    <property type="nucleotide sequence ID" value="NC_000909.1"/>
</dbReference>
<dbReference type="SMR" id="Q57585"/>
<dbReference type="FunCoup" id="Q57585">
    <property type="interactions" value="1"/>
</dbReference>
<dbReference type="STRING" id="243232.MJ_0121"/>
<dbReference type="PaxDb" id="243232-MJ_0121"/>
<dbReference type="EnsemblBacteria" id="AAB98102">
    <property type="protein sequence ID" value="AAB98102"/>
    <property type="gene ID" value="MJ_0121"/>
</dbReference>
<dbReference type="GeneID" id="1450964"/>
<dbReference type="KEGG" id="mja:MJ_0121"/>
<dbReference type="eggNOG" id="arCOG03228">
    <property type="taxonomic scope" value="Archaea"/>
</dbReference>
<dbReference type="HOGENOM" id="CLU_072513_0_0_2"/>
<dbReference type="InParanoid" id="Q57585"/>
<dbReference type="OrthoDB" id="64309at2157"/>
<dbReference type="PhylomeDB" id="Q57585"/>
<dbReference type="Proteomes" id="UP000000805">
    <property type="component" value="Chromosome"/>
</dbReference>
<dbReference type="GO" id="GO:0005524">
    <property type="term" value="F:ATP binding"/>
    <property type="evidence" value="ECO:0007669"/>
    <property type="project" value="UniProtKB-KW"/>
</dbReference>
<dbReference type="GO" id="GO:0016887">
    <property type="term" value="F:ATP hydrolysis activity"/>
    <property type="evidence" value="ECO:0007669"/>
    <property type="project" value="InterPro"/>
</dbReference>
<dbReference type="Gene3D" id="3.40.50.300">
    <property type="entry name" value="P-loop containing nucleotide triphosphate hydrolases"/>
    <property type="match status" value="1"/>
</dbReference>
<dbReference type="InterPro" id="IPR003593">
    <property type="entry name" value="AAA+_ATPase"/>
</dbReference>
<dbReference type="InterPro" id="IPR003439">
    <property type="entry name" value="ABC_transporter-like_ATP-bd"/>
</dbReference>
<dbReference type="InterPro" id="IPR027417">
    <property type="entry name" value="P-loop_NTPase"/>
</dbReference>
<dbReference type="PANTHER" id="PTHR43117">
    <property type="entry name" value="OSMOPROTECTANT IMPORT ATP-BINDING PROTEIN OSMV"/>
    <property type="match status" value="1"/>
</dbReference>
<dbReference type="PANTHER" id="PTHR43117:SF4">
    <property type="entry name" value="OSMOPROTECTANT IMPORT ATP-BINDING PROTEIN OSMV"/>
    <property type="match status" value="1"/>
</dbReference>
<dbReference type="Pfam" id="PF00005">
    <property type="entry name" value="ABC_tran"/>
    <property type="match status" value="1"/>
</dbReference>
<dbReference type="SMART" id="SM00382">
    <property type="entry name" value="AAA"/>
    <property type="match status" value="1"/>
</dbReference>
<dbReference type="SUPFAM" id="SSF52540">
    <property type="entry name" value="P-loop containing nucleoside triphosphate hydrolases"/>
    <property type="match status" value="1"/>
</dbReference>
<dbReference type="PROSITE" id="PS50893">
    <property type="entry name" value="ABC_TRANSPORTER_2"/>
    <property type="match status" value="1"/>
</dbReference>